<evidence type="ECO:0000250" key="1"/>
<evidence type="ECO:0000250" key="2">
    <source>
        <dbReference type="UniProtKB" id="P00163"/>
    </source>
</evidence>
<evidence type="ECO:0000255" key="3">
    <source>
        <dbReference type="PROSITE-ProRule" id="PRU00968"/>
    </source>
</evidence>
<organism>
    <name type="scientific">Brassica napus</name>
    <name type="common">Rape</name>
    <dbReference type="NCBI Taxonomy" id="3708"/>
    <lineage>
        <taxon>Eukaryota</taxon>
        <taxon>Viridiplantae</taxon>
        <taxon>Streptophyta</taxon>
        <taxon>Embryophyta</taxon>
        <taxon>Tracheophyta</taxon>
        <taxon>Spermatophyta</taxon>
        <taxon>Magnoliopsida</taxon>
        <taxon>eudicotyledons</taxon>
        <taxon>Gunneridae</taxon>
        <taxon>Pentapetalae</taxon>
        <taxon>rosids</taxon>
        <taxon>malvids</taxon>
        <taxon>Brassicales</taxon>
        <taxon>Brassicaceae</taxon>
        <taxon>Brassiceae</taxon>
        <taxon>Brassica</taxon>
    </lineage>
</organism>
<sequence>MTIRNQRFSLLKQPISSTLNQHLVDYPTPSNLSYWWGFGPLAGICLVIQIVTGVFLAMHYTPHVDLAFNSVEHIMRDVEGGWLLRYMHA</sequence>
<keyword id="KW-0249">Electron transport</keyword>
<keyword id="KW-0349">Heme</keyword>
<keyword id="KW-0408">Iron</keyword>
<keyword id="KW-0472">Membrane</keyword>
<keyword id="KW-0479">Metal-binding</keyword>
<keyword id="KW-0496">Mitochondrion</keyword>
<keyword id="KW-0999">Mitochondrion inner membrane</keyword>
<keyword id="KW-0679">Respiratory chain</keyword>
<keyword id="KW-0812">Transmembrane</keyword>
<keyword id="KW-1133">Transmembrane helix</keyword>
<keyword id="KW-0813">Transport</keyword>
<gene>
    <name type="primary">MT-CYB</name>
    <name type="synonym">COB</name>
    <name type="synonym">CYTB</name>
    <name type="synonym">MTCYB</name>
</gene>
<geneLocation type="mitochondrion"/>
<feature type="chain" id="PRO_0000060692" description="Cytochrome b">
    <location>
        <begin position="1"/>
        <end position="89" status="greater than"/>
    </location>
</feature>
<feature type="transmembrane region" description="Helical" evidence="2">
    <location>
        <begin position="38"/>
        <end position="58"/>
    </location>
</feature>
<feature type="transmembrane region" description="Helical" evidence="2">
    <location>
        <begin position="82"/>
        <end position="89" status="greater than"/>
    </location>
</feature>
<feature type="binding site" description="axial binding residue">
    <location>
        <position position="88"/>
    </location>
    <ligand>
        <name>heme b</name>
        <dbReference type="ChEBI" id="CHEBI:60344"/>
        <label>b562</label>
    </ligand>
    <ligandPart>
        <name>Fe</name>
        <dbReference type="ChEBI" id="CHEBI:18248"/>
    </ligandPart>
</feature>
<feature type="non-terminal residue">
    <location>
        <position position="89"/>
    </location>
</feature>
<comment type="function">
    <text evidence="2">Component of the ubiquinol-cytochrome c reductase complex (complex III or cytochrome b-c1 complex) that is part of the mitochondrial respiratory chain. The b-c1 complex mediates electron transfer from ubiquinol to cytochrome c. Contributes to the generation of a proton gradient across the mitochondrial membrane that is then used for ATP synthesis.</text>
</comment>
<comment type="cofactor">
    <cofactor evidence="2">
        <name>heme b</name>
        <dbReference type="ChEBI" id="CHEBI:60344"/>
    </cofactor>
    <text evidence="2">Binds 2 heme b groups non-covalently.</text>
</comment>
<comment type="subunit">
    <text evidence="1">The main subunits of complex b-c1 are: cytochrome b, cytochrome c1 and the Rieske protein.</text>
</comment>
<comment type="subcellular location">
    <subcellularLocation>
        <location evidence="2">Mitochondrion inner membrane</location>
        <topology evidence="2">Multi-pass membrane protein</topology>
    </subcellularLocation>
</comment>
<comment type="miscellaneous">
    <text evidence="1">Heme 1 (or BL or b562) is low-potential and absorbs at about 562 nm, and heme 2 (or BH or b566) is high-potential and absorbs at about 566 nm.</text>
</comment>
<comment type="similarity">
    <text evidence="3">Belongs to the cytochrome b family.</text>
</comment>
<comment type="caution">
    <text evidence="2">The protein contains only eight transmembrane helices, not nine as predicted by bioinformatics tools.</text>
</comment>
<reference key="1">
    <citation type="journal article" date="1993" name="Curr. Genet.">
        <title>Genes for ribosomal proteins S3, L16, L5 and S14 are clustered in the mitochondrial genome of Brassica napus L.</title>
        <authorList>
            <person name="Ye F."/>
            <person name="Bernhardt J."/>
            <person name="Abel W.O."/>
        </authorList>
    </citation>
    <scope>NUCLEOTIDE SEQUENCE [GENOMIC DNA]</scope>
    <source>
        <tissue>Leaf</tissue>
    </source>
</reference>
<dbReference type="EMBL" id="X68727">
    <property type="protein sequence ID" value="CAA48669.1"/>
    <property type="molecule type" value="Genomic_DNA"/>
</dbReference>
<dbReference type="PIR" id="S36917">
    <property type="entry name" value="S36917"/>
</dbReference>
<dbReference type="SMR" id="P49390"/>
<dbReference type="GO" id="GO:0005743">
    <property type="term" value="C:mitochondrial inner membrane"/>
    <property type="evidence" value="ECO:0007669"/>
    <property type="project" value="UniProtKB-SubCell"/>
</dbReference>
<dbReference type="GO" id="GO:0009055">
    <property type="term" value="F:electron transfer activity"/>
    <property type="evidence" value="ECO:0007669"/>
    <property type="project" value="InterPro"/>
</dbReference>
<dbReference type="GO" id="GO:0046872">
    <property type="term" value="F:metal ion binding"/>
    <property type="evidence" value="ECO:0007669"/>
    <property type="project" value="UniProtKB-KW"/>
</dbReference>
<dbReference type="GO" id="GO:0016491">
    <property type="term" value="F:oxidoreductase activity"/>
    <property type="evidence" value="ECO:0007669"/>
    <property type="project" value="InterPro"/>
</dbReference>
<dbReference type="GO" id="GO:0022904">
    <property type="term" value="P:respiratory electron transport chain"/>
    <property type="evidence" value="ECO:0007669"/>
    <property type="project" value="InterPro"/>
</dbReference>
<dbReference type="Gene3D" id="1.20.810.10">
    <property type="entry name" value="Cytochrome Bc1 Complex, Chain C"/>
    <property type="match status" value="1"/>
</dbReference>
<dbReference type="InterPro" id="IPR005797">
    <property type="entry name" value="Cyt_b/b6_N"/>
</dbReference>
<dbReference type="InterPro" id="IPR027387">
    <property type="entry name" value="Cytb/b6-like_sf"/>
</dbReference>
<dbReference type="InterPro" id="IPR016174">
    <property type="entry name" value="Di-haem_cyt_TM"/>
</dbReference>
<dbReference type="PANTHER" id="PTHR19271">
    <property type="entry name" value="CYTOCHROME B"/>
    <property type="match status" value="1"/>
</dbReference>
<dbReference type="PANTHER" id="PTHR19271:SF16">
    <property type="entry name" value="CYTOCHROME B"/>
    <property type="match status" value="1"/>
</dbReference>
<dbReference type="Pfam" id="PF00033">
    <property type="entry name" value="Cytochrome_B"/>
    <property type="match status" value="1"/>
</dbReference>
<dbReference type="SUPFAM" id="SSF81342">
    <property type="entry name" value="Transmembrane di-heme cytochromes"/>
    <property type="match status" value="1"/>
</dbReference>
<dbReference type="PROSITE" id="PS51002">
    <property type="entry name" value="CYTB_NTER"/>
    <property type="match status" value="1"/>
</dbReference>
<name>CYB_BRANA</name>
<accession>P49390</accession>
<protein>
    <recommendedName>
        <fullName>Cytochrome b</fullName>
    </recommendedName>
    <alternativeName>
        <fullName>Complex III subunit 3</fullName>
    </alternativeName>
    <alternativeName>
        <fullName>Complex III subunit III</fullName>
    </alternativeName>
    <alternativeName>
        <fullName>Cytochrome b-c1 complex subunit 3</fullName>
    </alternativeName>
    <alternativeName>
        <fullName>Ubiquinol-cytochrome-c reductase complex cytochrome b subunit</fullName>
    </alternativeName>
</protein>
<proteinExistence type="inferred from homology"/>